<reference key="1">
    <citation type="submission" date="2008-05" db="EMBL/GenBank/DDBJ databases">
        <title>Complete sequence of Chlorobium limicola DSM 245.</title>
        <authorList>
            <consortium name="US DOE Joint Genome Institute"/>
            <person name="Lucas S."/>
            <person name="Copeland A."/>
            <person name="Lapidus A."/>
            <person name="Glavina del Rio T."/>
            <person name="Dalin E."/>
            <person name="Tice H."/>
            <person name="Bruce D."/>
            <person name="Goodwin L."/>
            <person name="Pitluck S."/>
            <person name="Schmutz J."/>
            <person name="Larimer F."/>
            <person name="Land M."/>
            <person name="Hauser L."/>
            <person name="Kyrpides N."/>
            <person name="Ovchinnikova G."/>
            <person name="Zhao F."/>
            <person name="Li T."/>
            <person name="Liu Z."/>
            <person name="Overmann J."/>
            <person name="Bryant D.A."/>
            <person name="Richardson P."/>
        </authorList>
    </citation>
    <scope>NUCLEOTIDE SEQUENCE [LARGE SCALE GENOMIC DNA]</scope>
    <source>
        <strain>DSM 245 / NBRC 103803 / 6330</strain>
    </source>
</reference>
<name>RS7_CHLL2</name>
<feature type="chain" id="PRO_1000125912" description="Small ribosomal subunit protein uS7">
    <location>
        <begin position="1"/>
        <end position="155"/>
    </location>
</feature>
<gene>
    <name evidence="1" type="primary">rpsG</name>
    <name type="ordered locus">Clim_2233</name>
</gene>
<sequence>MSKKGSYKSVGGDFRYGDESVSRFINAVMLDGKKDVAAKIVYDAFDIIAEKMTGENPLEVYRKAMSNIAPVVEVRSKRVGGATYQIPMEVKSSRRGALAFRWLKLYAAKRGGRSMAEKFAAELMDAANEQGASVKKRDEVHRMADANKAFAHFRF</sequence>
<keyword id="KW-0687">Ribonucleoprotein</keyword>
<keyword id="KW-0689">Ribosomal protein</keyword>
<keyword id="KW-0694">RNA-binding</keyword>
<keyword id="KW-0699">rRNA-binding</keyword>
<keyword id="KW-0820">tRNA-binding</keyword>
<dbReference type="EMBL" id="CP001097">
    <property type="protein sequence ID" value="ACD91257.1"/>
    <property type="molecule type" value="Genomic_DNA"/>
</dbReference>
<dbReference type="RefSeq" id="WP_012467124.1">
    <property type="nucleotide sequence ID" value="NC_010803.1"/>
</dbReference>
<dbReference type="SMR" id="B3EH95"/>
<dbReference type="STRING" id="290315.Clim_2233"/>
<dbReference type="KEGG" id="cli:Clim_2233"/>
<dbReference type="eggNOG" id="COG0049">
    <property type="taxonomic scope" value="Bacteria"/>
</dbReference>
<dbReference type="HOGENOM" id="CLU_072226_1_1_10"/>
<dbReference type="OrthoDB" id="9807653at2"/>
<dbReference type="Proteomes" id="UP000008841">
    <property type="component" value="Chromosome"/>
</dbReference>
<dbReference type="GO" id="GO:0015935">
    <property type="term" value="C:small ribosomal subunit"/>
    <property type="evidence" value="ECO:0007669"/>
    <property type="project" value="InterPro"/>
</dbReference>
<dbReference type="GO" id="GO:0019843">
    <property type="term" value="F:rRNA binding"/>
    <property type="evidence" value="ECO:0007669"/>
    <property type="project" value="UniProtKB-UniRule"/>
</dbReference>
<dbReference type="GO" id="GO:0003735">
    <property type="term" value="F:structural constituent of ribosome"/>
    <property type="evidence" value="ECO:0007669"/>
    <property type="project" value="InterPro"/>
</dbReference>
<dbReference type="GO" id="GO:0000049">
    <property type="term" value="F:tRNA binding"/>
    <property type="evidence" value="ECO:0007669"/>
    <property type="project" value="UniProtKB-UniRule"/>
</dbReference>
<dbReference type="GO" id="GO:0006412">
    <property type="term" value="P:translation"/>
    <property type="evidence" value="ECO:0007669"/>
    <property type="project" value="UniProtKB-UniRule"/>
</dbReference>
<dbReference type="CDD" id="cd14869">
    <property type="entry name" value="uS7_Bacteria"/>
    <property type="match status" value="1"/>
</dbReference>
<dbReference type="FunFam" id="1.10.455.10:FF:000001">
    <property type="entry name" value="30S ribosomal protein S7"/>
    <property type="match status" value="1"/>
</dbReference>
<dbReference type="Gene3D" id="1.10.455.10">
    <property type="entry name" value="Ribosomal protein S7 domain"/>
    <property type="match status" value="1"/>
</dbReference>
<dbReference type="HAMAP" id="MF_00480_B">
    <property type="entry name" value="Ribosomal_uS7_B"/>
    <property type="match status" value="1"/>
</dbReference>
<dbReference type="InterPro" id="IPR000235">
    <property type="entry name" value="Ribosomal_uS7"/>
</dbReference>
<dbReference type="InterPro" id="IPR005717">
    <property type="entry name" value="Ribosomal_uS7_bac/org-type"/>
</dbReference>
<dbReference type="InterPro" id="IPR023798">
    <property type="entry name" value="Ribosomal_uS7_dom"/>
</dbReference>
<dbReference type="InterPro" id="IPR036823">
    <property type="entry name" value="Ribosomal_uS7_dom_sf"/>
</dbReference>
<dbReference type="NCBIfam" id="TIGR01029">
    <property type="entry name" value="rpsG_bact"/>
    <property type="match status" value="1"/>
</dbReference>
<dbReference type="PANTHER" id="PTHR11205">
    <property type="entry name" value="RIBOSOMAL PROTEIN S7"/>
    <property type="match status" value="1"/>
</dbReference>
<dbReference type="Pfam" id="PF00177">
    <property type="entry name" value="Ribosomal_S7"/>
    <property type="match status" value="1"/>
</dbReference>
<dbReference type="PIRSF" id="PIRSF002122">
    <property type="entry name" value="RPS7p_RPS7a_RPS5e_RPS7o"/>
    <property type="match status" value="1"/>
</dbReference>
<dbReference type="SUPFAM" id="SSF47973">
    <property type="entry name" value="Ribosomal protein S7"/>
    <property type="match status" value="1"/>
</dbReference>
<proteinExistence type="inferred from homology"/>
<accession>B3EH95</accession>
<comment type="function">
    <text evidence="1">One of the primary rRNA binding proteins, it binds directly to 16S rRNA where it nucleates assembly of the head domain of the 30S subunit. Is located at the subunit interface close to the decoding center, probably blocks exit of the E-site tRNA.</text>
</comment>
<comment type="subunit">
    <text evidence="1">Part of the 30S ribosomal subunit. Contacts proteins S9 and S11.</text>
</comment>
<comment type="similarity">
    <text evidence="1">Belongs to the universal ribosomal protein uS7 family.</text>
</comment>
<organism>
    <name type="scientific">Chlorobium limicola (strain DSM 245 / NBRC 103803 / 6330)</name>
    <dbReference type="NCBI Taxonomy" id="290315"/>
    <lineage>
        <taxon>Bacteria</taxon>
        <taxon>Pseudomonadati</taxon>
        <taxon>Chlorobiota</taxon>
        <taxon>Chlorobiia</taxon>
        <taxon>Chlorobiales</taxon>
        <taxon>Chlorobiaceae</taxon>
        <taxon>Chlorobium/Pelodictyon group</taxon>
        <taxon>Chlorobium</taxon>
    </lineage>
</organism>
<protein>
    <recommendedName>
        <fullName evidence="1">Small ribosomal subunit protein uS7</fullName>
    </recommendedName>
    <alternativeName>
        <fullName evidence="2">30S ribosomal protein S7</fullName>
    </alternativeName>
</protein>
<evidence type="ECO:0000255" key="1">
    <source>
        <dbReference type="HAMAP-Rule" id="MF_00480"/>
    </source>
</evidence>
<evidence type="ECO:0000305" key="2"/>